<gene>
    <name type="primary">bcrA</name>
</gene>
<keyword id="KW-0046">Antibiotic resistance</keyword>
<keyword id="KW-0067">ATP-binding</keyword>
<keyword id="KW-0547">Nucleotide-binding</keyword>
<keyword id="KW-0813">Transport</keyword>
<feature type="chain" id="PRO_0000091946" description="Bacitracin transport ATP-binding protein BcrA">
    <location>
        <begin position="1"/>
        <end position="306"/>
    </location>
</feature>
<feature type="domain" description="ABC transporter" evidence="2">
    <location>
        <begin position="5"/>
        <end position="233"/>
    </location>
</feature>
<feature type="binding site" evidence="2">
    <location>
        <begin position="37"/>
        <end position="44"/>
    </location>
    <ligand>
        <name>ATP</name>
        <dbReference type="ChEBI" id="CHEBI:30616"/>
    </ligand>
</feature>
<reference key="1">
    <citation type="journal article" date="1995" name="Mol. Microbiol.">
        <title>Bacillus licheniformis bacitracin-resistance ABC transporter: relationship to mammalian multidrug resistance.</title>
        <authorList>
            <person name="Podlesek Z."/>
            <person name="Comino A."/>
            <person name="Herzog-Velikonja B."/>
            <person name="Zgur-Bertok D."/>
            <person name="Komel R."/>
            <person name="Grabnar M."/>
        </authorList>
    </citation>
    <scope>NUCLEOTIDE SEQUENCE [GENOMIC DNA]</scope>
    <source>
        <strain>ATCC 9945A / NCIMB 11709</strain>
    </source>
</reference>
<proteinExistence type="inferred from homology"/>
<dbReference type="EMBL" id="L20573">
    <property type="protein sequence ID" value="AAA99504.1"/>
    <property type="molecule type" value="Unassigned_DNA"/>
</dbReference>
<dbReference type="PIR" id="S77627">
    <property type="entry name" value="S77627"/>
</dbReference>
<dbReference type="SMR" id="P42332"/>
<dbReference type="DrugBank" id="DB00626">
    <property type="generic name" value="Bacitracin"/>
</dbReference>
<dbReference type="CARD" id="ARO:3002987">
    <property type="molecule name" value="bcrA"/>
    <property type="mechanism identifier" value="ARO:0010000"/>
    <property type="mechanism name" value="antibiotic efflux"/>
</dbReference>
<dbReference type="TCDB" id="3.A.1.131.1">
    <property type="family name" value="the atp-binding cassette (abc) superfamily"/>
</dbReference>
<dbReference type="GO" id="GO:0005524">
    <property type="term" value="F:ATP binding"/>
    <property type="evidence" value="ECO:0007669"/>
    <property type="project" value="UniProtKB-KW"/>
</dbReference>
<dbReference type="GO" id="GO:0016887">
    <property type="term" value="F:ATP hydrolysis activity"/>
    <property type="evidence" value="ECO:0007669"/>
    <property type="project" value="InterPro"/>
</dbReference>
<dbReference type="GO" id="GO:0046677">
    <property type="term" value="P:response to antibiotic"/>
    <property type="evidence" value="ECO:0007669"/>
    <property type="project" value="UniProtKB-KW"/>
</dbReference>
<dbReference type="CDD" id="cd03268">
    <property type="entry name" value="ABC_BcrA_bacitracin_resist"/>
    <property type="match status" value="1"/>
</dbReference>
<dbReference type="Gene3D" id="3.40.50.300">
    <property type="entry name" value="P-loop containing nucleotide triphosphate hydrolases"/>
    <property type="match status" value="1"/>
</dbReference>
<dbReference type="InterPro" id="IPR003593">
    <property type="entry name" value="AAA+_ATPase"/>
</dbReference>
<dbReference type="InterPro" id="IPR003439">
    <property type="entry name" value="ABC_transporter-like_ATP-bd"/>
</dbReference>
<dbReference type="InterPro" id="IPR017871">
    <property type="entry name" value="ABC_transporter-like_CS"/>
</dbReference>
<dbReference type="InterPro" id="IPR027417">
    <property type="entry name" value="P-loop_NTPase"/>
</dbReference>
<dbReference type="PANTHER" id="PTHR43335">
    <property type="entry name" value="ABC TRANSPORTER, ATP-BINDING PROTEIN"/>
    <property type="match status" value="1"/>
</dbReference>
<dbReference type="PANTHER" id="PTHR43335:SF8">
    <property type="entry name" value="ABC TRANSPORTER, ATP-BINDING PROTEIN"/>
    <property type="match status" value="1"/>
</dbReference>
<dbReference type="Pfam" id="PF00005">
    <property type="entry name" value="ABC_tran"/>
    <property type="match status" value="1"/>
</dbReference>
<dbReference type="SMART" id="SM00382">
    <property type="entry name" value="AAA"/>
    <property type="match status" value="1"/>
</dbReference>
<dbReference type="SUPFAM" id="SSF52540">
    <property type="entry name" value="P-loop containing nucleoside triphosphate hydrolases"/>
    <property type="match status" value="1"/>
</dbReference>
<dbReference type="PROSITE" id="PS00211">
    <property type="entry name" value="ABC_TRANSPORTER_1"/>
    <property type="match status" value="1"/>
</dbReference>
<dbReference type="PROSITE" id="PS50893">
    <property type="entry name" value="ABC_TRANSPORTER_2"/>
    <property type="match status" value="1"/>
</dbReference>
<sequence length="306" mass="34641">MSTIIKTTDLTKMYGSQKSVDHLNINVKQGDIYGFLGRNGAGKTTTIRMLLGLIKPTSGQIEIFGENFFKNKKEILRRIGSIVEVPGFYANLTARENLLINAKIIGIHKKNAIDEVLEIVGLQHETKKLVGKFSLGMKQRLGIARALLHYPELLILDEPTNGLDPIGIKEMRRLIHSLAKERNITIFISSHILSEIEQLVDHVGIIHEGKLLEEIPFDHLKKRNRKYLEFQLSDQNKAVVLMEQHFDIHDYEVHQDGIIRVYSHLGQQGKLNKLFVENGIDVLKITMSEDSLEDYFVKLIGGGTIG</sequence>
<protein>
    <recommendedName>
        <fullName>Bacitracin transport ATP-binding protein BcrA</fullName>
    </recommendedName>
</protein>
<accession>P42332</accession>
<organism>
    <name type="scientific">Bacillus licheniformis</name>
    <dbReference type="NCBI Taxonomy" id="1402"/>
    <lineage>
        <taxon>Bacteria</taxon>
        <taxon>Bacillati</taxon>
        <taxon>Bacillota</taxon>
        <taxon>Bacilli</taxon>
        <taxon>Bacillales</taxon>
        <taxon>Bacillaceae</taxon>
        <taxon>Bacillus</taxon>
    </lineage>
</organism>
<evidence type="ECO:0000250" key="1"/>
<evidence type="ECO:0000255" key="2">
    <source>
        <dbReference type="PROSITE-ProRule" id="PRU00434"/>
    </source>
</evidence>
<evidence type="ECO:0000305" key="3"/>
<comment type="function">
    <text evidence="1">Part of the binding-protein-dependent transport system for bacitracin that confer resistance to this antibiotic. Probably responsible for energy coupling to the transport system (By similarity).</text>
</comment>
<comment type="similarity">
    <text evidence="3">Belongs to the ABC transporter superfamily.</text>
</comment>
<name>BCRA_BACLI</name>